<evidence type="ECO:0000250" key="1"/>
<evidence type="ECO:0000255" key="2"/>
<evidence type="ECO:0000256" key="3">
    <source>
        <dbReference type="SAM" id="MobiDB-lite"/>
    </source>
</evidence>
<evidence type="ECO:0000305" key="4"/>
<evidence type="ECO:0007744" key="5">
    <source>
    </source>
</evidence>
<reference key="1">
    <citation type="journal article" date="2005" name="Science">
        <title>The transcriptional landscape of the mammalian genome.</title>
        <authorList>
            <person name="Carninci P."/>
            <person name="Kasukawa T."/>
            <person name="Katayama S."/>
            <person name="Gough J."/>
            <person name="Frith M.C."/>
            <person name="Maeda N."/>
            <person name="Oyama R."/>
            <person name="Ravasi T."/>
            <person name="Lenhard B."/>
            <person name="Wells C."/>
            <person name="Kodzius R."/>
            <person name="Shimokawa K."/>
            <person name="Bajic V.B."/>
            <person name="Brenner S.E."/>
            <person name="Batalov S."/>
            <person name="Forrest A.R."/>
            <person name="Zavolan M."/>
            <person name="Davis M.J."/>
            <person name="Wilming L.G."/>
            <person name="Aidinis V."/>
            <person name="Allen J.E."/>
            <person name="Ambesi-Impiombato A."/>
            <person name="Apweiler R."/>
            <person name="Aturaliya R.N."/>
            <person name="Bailey T.L."/>
            <person name="Bansal M."/>
            <person name="Baxter L."/>
            <person name="Beisel K.W."/>
            <person name="Bersano T."/>
            <person name="Bono H."/>
            <person name="Chalk A.M."/>
            <person name="Chiu K.P."/>
            <person name="Choudhary V."/>
            <person name="Christoffels A."/>
            <person name="Clutterbuck D.R."/>
            <person name="Crowe M.L."/>
            <person name="Dalla E."/>
            <person name="Dalrymple B.P."/>
            <person name="de Bono B."/>
            <person name="Della Gatta G."/>
            <person name="di Bernardo D."/>
            <person name="Down T."/>
            <person name="Engstrom P."/>
            <person name="Fagiolini M."/>
            <person name="Faulkner G."/>
            <person name="Fletcher C.F."/>
            <person name="Fukushima T."/>
            <person name="Furuno M."/>
            <person name="Futaki S."/>
            <person name="Gariboldi M."/>
            <person name="Georgii-Hemming P."/>
            <person name="Gingeras T.R."/>
            <person name="Gojobori T."/>
            <person name="Green R.E."/>
            <person name="Gustincich S."/>
            <person name="Harbers M."/>
            <person name="Hayashi Y."/>
            <person name="Hensch T.K."/>
            <person name="Hirokawa N."/>
            <person name="Hill D."/>
            <person name="Huminiecki L."/>
            <person name="Iacono M."/>
            <person name="Ikeo K."/>
            <person name="Iwama A."/>
            <person name="Ishikawa T."/>
            <person name="Jakt M."/>
            <person name="Kanapin A."/>
            <person name="Katoh M."/>
            <person name="Kawasawa Y."/>
            <person name="Kelso J."/>
            <person name="Kitamura H."/>
            <person name="Kitano H."/>
            <person name="Kollias G."/>
            <person name="Krishnan S.P."/>
            <person name="Kruger A."/>
            <person name="Kummerfeld S.K."/>
            <person name="Kurochkin I.V."/>
            <person name="Lareau L.F."/>
            <person name="Lazarevic D."/>
            <person name="Lipovich L."/>
            <person name="Liu J."/>
            <person name="Liuni S."/>
            <person name="McWilliam S."/>
            <person name="Madan Babu M."/>
            <person name="Madera M."/>
            <person name="Marchionni L."/>
            <person name="Matsuda H."/>
            <person name="Matsuzawa S."/>
            <person name="Miki H."/>
            <person name="Mignone F."/>
            <person name="Miyake S."/>
            <person name="Morris K."/>
            <person name="Mottagui-Tabar S."/>
            <person name="Mulder N."/>
            <person name="Nakano N."/>
            <person name="Nakauchi H."/>
            <person name="Ng P."/>
            <person name="Nilsson R."/>
            <person name="Nishiguchi S."/>
            <person name="Nishikawa S."/>
            <person name="Nori F."/>
            <person name="Ohara O."/>
            <person name="Okazaki Y."/>
            <person name="Orlando V."/>
            <person name="Pang K.C."/>
            <person name="Pavan W.J."/>
            <person name="Pavesi G."/>
            <person name="Pesole G."/>
            <person name="Petrovsky N."/>
            <person name="Piazza S."/>
            <person name="Reed J."/>
            <person name="Reid J.F."/>
            <person name="Ring B.Z."/>
            <person name="Ringwald M."/>
            <person name="Rost B."/>
            <person name="Ruan Y."/>
            <person name="Salzberg S.L."/>
            <person name="Sandelin A."/>
            <person name="Schneider C."/>
            <person name="Schoenbach C."/>
            <person name="Sekiguchi K."/>
            <person name="Semple C.A."/>
            <person name="Seno S."/>
            <person name="Sessa L."/>
            <person name="Sheng Y."/>
            <person name="Shibata Y."/>
            <person name="Shimada H."/>
            <person name="Shimada K."/>
            <person name="Silva D."/>
            <person name="Sinclair B."/>
            <person name="Sperling S."/>
            <person name="Stupka E."/>
            <person name="Sugiura K."/>
            <person name="Sultana R."/>
            <person name="Takenaka Y."/>
            <person name="Taki K."/>
            <person name="Tammoja K."/>
            <person name="Tan S.L."/>
            <person name="Tang S."/>
            <person name="Taylor M.S."/>
            <person name="Tegner J."/>
            <person name="Teichmann S.A."/>
            <person name="Ueda H.R."/>
            <person name="van Nimwegen E."/>
            <person name="Verardo R."/>
            <person name="Wei C.L."/>
            <person name="Yagi K."/>
            <person name="Yamanishi H."/>
            <person name="Zabarovsky E."/>
            <person name="Zhu S."/>
            <person name="Zimmer A."/>
            <person name="Hide W."/>
            <person name="Bult C."/>
            <person name="Grimmond S.M."/>
            <person name="Teasdale R.D."/>
            <person name="Liu E.T."/>
            <person name="Brusic V."/>
            <person name="Quackenbush J."/>
            <person name="Wahlestedt C."/>
            <person name="Mattick J.S."/>
            <person name="Hume D.A."/>
            <person name="Kai C."/>
            <person name="Sasaki D."/>
            <person name="Tomaru Y."/>
            <person name="Fukuda S."/>
            <person name="Kanamori-Katayama M."/>
            <person name="Suzuki M."/>
            <person name="Aoki J."/>
            <person name="Arakawa T."/>
            <person name="Iida J."/>
            <person name="Imamura K."/>
            <person name="Itoh M."/>
            <person name="Kato T."/>
            <person name="Kawaji H."/>
            <person name="Kawagashira N."/>
            <person name="Kawashima T."/>
            <person name="Kojima M."/>
            <person name="Kondo S."/>
            <person name="Konno H."/>
            <person name="Nakano K."/>
            <person name="Ninomiya N."/>
            <person name="Nishio T."/>
            <person name="Okada M."/>
            <person name="Plessy C."/>
            <person name="Shibata K."/>
            <person name="Shiraki T."/>
            <person name="Suzuki S."/>
            <person name="Tagami M."/>
            <person name="Waki K."/>
            <person name="Watahiki A."/>
            <person name="Okamura-Oho Y."/>
            <person name="Suzuki H."/>
            <person name="Kawai J."/>
            <person name="Hayashizaki Y."/>
        </authorList>
    </citation>
    <scope>NUCLEOTIDE SEQUENCE [LARGE SCALE MRNA]</scope>
    <source>
        <strain>C57BL/6J</strain>
        <strain>DBA/2J</strain>
        <strain>NOD</strain>
        <tissue>Bone marrow</tissue>
        <tissue>Pancreas</tissue>
        <tissue>Thymus</tissue>
        <tissue>Urinary bladder</tissue>
    </source>
</reference>
<reference key="2">
    <citation type="journal article" date="2004" name="Genome Res.">
        <title>The status, quality, and expansion of the NIH full-length cDNA project: the Mammalian Gene Collection (MGC).</title>
        <authorList>
            <consortium name="The MGC Project Team"/>
        </authorList>
    </citation>
    <scope>NUCLEOTIDE SEQUENCE [LARGE SCALE MRNA]</scope>
    <source>
        <strain>FVB/N</strain>
        <tissue>Liver</tissue>
        <tissue>Mammary tumor</tissue>
    </source>
</reference>
<reference key="3">
    <citation type="journal article" date="2009" name="Mol. Cell. Proteomics">
        <title>Large scale localization of protein phosphorylation by use of electron capture dissociation mass spectrometry.</title>
        <authorList>
            <person name="Sweet S.M."/>
            <person name="Bailey C.M."/>
            <person name="Cunningham D.L."/>
            <person name="Heath J.K."/>
            <person name="Cooper H.J."/>
        </authorList>
    </citation>
    <scope>PHOSPHORYLATION [LARGE SCALE ANALYSIS] AT TYR-171</scope>
    <scope>IDENTIFICATION BY MASS SPECTROMETRY [LARGE SCALE ANALYSIS]</scope>
    <source>
        <tissue>Embryonic fibroblast</tissue>
    </source>
</reference>
<organism>
    <name type="scientific">Mus musculus</name>
    <name type="common">Mouse</name>
    <dbReference type="NCBI Taxonomy" id="10090"/>
    <lineage>
        <taxon>Eukaryota</taxon>
        <taxon>Metazoa</taxon>
        <taxon>Chordata</taxon>
        <taxon>Craniata</taxon>
        <taxon>Vertebrata</taxon>
        <taxon>Euteleostomi</taxon>
        <taxon>Mammalia</taxon>
        <taxon>Eutheria</taxon>
        <taxon>Euarchontoglires</taxon>
        <taxon>Glires</taxon>
        <taxon>Rodentia</taxon>
        <taxon>Myomorpha</taxon>
        <taxon>Muroidea</taxon>
        <taxon>Muridae</taxon>
        <taxon>Murinae</taxon>
        <taxon>Mus</taxon>
        <taxon>Mus</taxon>
    </lineage>
</organism>
<protein>
    <recommendedName>
        <fullName>Pituitary tumor-transforming gene 1 protein-interacting protein</fullName>
    </recommendedName>
    <alternativeName>
        <fullName>Pituitary tumor-transforming gene protein-binding factor</fullName>
        <shortName>PBF</shortName>
        <shortName>PTTG-binding factor</shortName>
    </alternativeName>
</protein>
<accession>Q8R143</accession>
<accession>Q3TVT1</accession>
<accession>Q8BJ96</accession>
<accession>Q8N7P0</accession>
<dbReference type="EMBL" id="AK035696">
    <property type="protein sequence ID" value="BAC29156.1"/>
    <property type="molecule type" value="mRNA"/>
</dbReference>
<dbReference type="EMBL" id="AK075773">
    <property type="protein sequence ID" value="BAC35947.1"/>
    <property type="molecule type" value="mRNA"/>
</dbReference>
<dbReference type="EMBL" id="AK088813">
    <property type="protein sequence ID" value="BAC40589.1"/>
    <property type="molecule type" value="mRNA"/>
</dbReference>
<dbReference type="EMBL" id="AK089887">
    <property type="protein sequence ID" value="BAC40985.1"/>
    <property type="molecule type" value="mRNA"/>
</dbReference>
<dbReference type="EMBL" id="AK098093">
    <property type="protein sequence ID" value="BAC05231.1"/>
    <property type="molecule type" value="mRNA"/>
</dbReference>
<dbReference type="EMBL" id="AK152366">
    <property type="protein sequence ID" value="BAE31156.1"/>
    <property type="molecule type" value="mRNA"/>
</dbReference>
<dbReference type="EMBL" id="AK159987">
    <property type="protein sequence ID" value="BAE35537.1"/>
    <property type="molecule type" value="mRNA"/>
</dbReference>
<dbReference type="EMBL" id="AK167972">
    <property type="protein sequence ID" value="BAE39966.1"/>
    <property type="molecule type" value="mRNA"/>
</dbReference>
<dbReference type="EMBL" id="AK168164">
    <property type="protein sequence ID" value="BAE40125.1"/>
    <property type="molecule type" value="mRNA"/>
</dbReference>
<dbReference type="EMBL" id="AK170802">
    <property type="protein sequence ID" value="BAE42037.1"/>
    <property type="molecule type" value="mRNA"/>
</dbReference>
<dbReference type="EMBL" id="AK170971">
    <property type="protein sequence ID" value="BAE42150.1"/>
    <property type="molecule type" value="mRNA"/>
</dbReference>
<dbReference type="EMBL" id="AK170972">
    <property type="protein sequence ID" value="BAE42151.1"/>
    <property type="molecule type" value="mRNA"/>
</dbReference>
<dbReference type="EMBL" id="AK171140">
    <property type="protein sequence ID" value="BAE42273.1"/>
    <property type="molecule type" value="mRNA"/>
</dbReference>
<dbReference type="EMBL" id="BC025533">
    <property type="protein sequence ID" value="AAH25533.1"/>
    <property type="molecule type" value="mRNA"/>
</dbReference>
<dbReference type="EMBL" id="BC023961">
    <property type="protein sequence ID" value="AAH23961.1"/>
    <property type="molecule type" value="mRNA"/>
</dbReference>
<dbReference type="EMBL" id="BC029144">
    <property type="protein sequence ID" value="AAH29144.1"/>
    <property type="molecule type" value="mRNA"/>
</dbReference>
<dbReference type="EMBL" id="BC032184">
    <property type="protein sequence ID" value="AAH32184.1"/>
    <property type="molecule type" value="mRNA"/>
</dbReference>
<dbReference type="CCDS" id="CCDS23957.1"/>
<dbReference type="RefSeq" id="NP_666037.1">
    <property type="nucleotide sequence ID" value="NM_145925.3"/>
</dbReference>
<dbReference type="SMR" id="Q8R143"/>
<dbReference type="BioGRID" id="224383">
    <property type="interactions" value="1"/>
</dbReference>
<dbReference type="FunCoup" id="Q8R143">
    <property type="interactions" value="2470"/>
</dbReference>
<dbReference type="STRING" id="10090.ENSMUSP00000009435"/>
<dbReference type="GlyCosmos" id="Q8R143">
    <property type="glycosylation" value="2 sites, No reported glycans"/>
</dbReference>
<dbReference type="GlyGen" id="Q8R143">
    <property type="glycosylation" value="3 sites, 2 N-linked glycans (2 sites)"/>
</dbReference>
<dbReference type="iPTMnet" id="Q8R143"/>
<dbReference type="PhosphoSitePlus" id="Q8R143"/>
<dbReference type="SwissPalm" id="Q8R143"/>
<dbReference type="jPOST" id="Q8R143"/>
<dbReference type="PaxDb" id="10090-ENSMUSP00000009435"/>
<dbReference type="PeptideAtlas" id="Q8R143"/>
<dbReference type="ProteomicsDB" id="301888"/>
<dbReference type="Pumba" id="Q8R143"/>
<dbReference type="Antibodypedia" id="24351">
    <property type="antibodies" value="168 antibodies from 30 providers"/>
</dbReference>
<dbReference type="DNASU" id="108705"/>
<dbReference type="Ensembl" id="ENSMUST00000009435.12">
    <property type="protein sequence ID" value="ENSMUSP00000009435.6"/>
    <property type="gene ID" value="ENSMUSG00000009291.14"/>
</dbReference>
<dbReference type="GeneID" id="108705"/>
<dbReference type="KEGG" id="mmu:108705"/>
<dbReference type="UCSC" id="uc007fvx.1">
    <property type="organism name" value="mouse"/>
</dbReference>
<dbReference type="AGR" id="MGI:2652132"/>
<dbReference type="CTD" id="754"/>
<dbReference type="MGI" id="MGI:2652132">
    <property type="gene designation" value="Pttg1ip"/>
</dbReference>
<dbReference type="VEuPathDB" id="HostDB:ENSMUSG00000009291"/>
<dbReference type="eggNOG" id="ENOG502RYM1">
    <property type="taxonomic scope" value="Eukaryota"/>
</dbReference>
<dbReference type="GeneTree" id="ENSGT00390000004977"/>
<dbReference type="HOGENOM" id="CLU_109415_0_0_1"/>
<dbReference type="InParanoid" id="Q8R143"/>
<dbReference type="OMA" id="CVEYPVR"/>
<dbReference type="OrthoDB" id="5829916at2759"/>
<dbReference type="PhylomeDB" id="Q8R143"/>
<dbReference type="TreeFam" id="TF329310"/>
<dbReference type="BioGRID-ORCS" id="108705">
    <property type="hits" value="1 hit in 79 CRISPR screens"/>
</dbReference>
<dbReference type="ChiTaRS" id="Pttg1ip">
    <property type="organism name" value="mouse"/>
</dbReference>
<dbReference type="PRO" id="PR:Q8R143"/>
<dbReference type="Proteomes" id="UP000000589">
    <property type="component" value="Chromosome 10"/>
</dbReference>
<dbReference type="RNAct" id="Q8R143">
    <property type="molecule type" value="protein"/>
</dbReference>
<dbReference type="Bgee" id="ENSMUSG00000009291">
    <property type="expression patterns" value="Expressed in epithelium of stomach and 275 other cell types or tissues"/>
</dbReference>
<dbReference type="ExpressionAtlas" id="Q8R143">
    <property type="expression patterns" value="baseline and differential"/>
</dbReference>
<dbReference type="GO" id="GO:0005737">
    <property type="term" value="C:cytoplasm"/>
    <property type="evidence" value="ECO:0007669"/>
    <property type="project" value="UniProtKB-SubCell"/>
</dbReference>
<dbReference type="GO" id="GO:0005634">
    <property type="term" value="C:nucleus"/>
    <property type="evidence" value="ECO:0007669"/>
    <property type="project" value="UniProtKB-SubCell"/>
</dbReference>
<dbReference type="GO" id="GO:0005886">
    <property type="term" value="C:plasma membrane"/>
    <property type="evidence" value="ECO:0007669"/>
    <property type="project" value="UniProtKB-SubCell"/>
</dbReference>
<dbReference type="GO" id="GO:0002039">
    <property type="term" value="F:p53 binding"/>
    <property type="evidence" value="ECO:0000266"/>
    <property type="project" value="MGI"/>
</dbReference>
<dbReference type="GO" id="GO:0043518">
    <property type="term" value="P:negative regulation of DNA damage response, signal transduction by p53 class mediator"/>
    <property type="evidence" value="ECO:0000266"/>
    <property type="project" value="MGI"/>
</dbReference>
<dbReference type="GO" id="GO:1902254">
    <property type="term" value="P:negative regulation of intrinsic apoptotic signaling pathway by p53 class mediator"/>
    <property type="evidence" value="ECO:0000266"/>
    <property type="project" value="MGI"/>
</dbReference>
<dbReference type="GO" id="GO:0045732">
    <property type="term" value="P:positive regulation of protein catabolic process"/>
    <property type="evidence" value="ECO:0000266"/>
    <property type="project" value="MGI"/>
</dbReference>
<dbReference type="GO" id="GO:0031398">
    <property type="term" value="P:positive regulation of protein ubiquitination"/>
    <property type="evidence" value="ECO:0000266"/>
    <property type="project" value="MGI"/>
</dbReference>
<dbReference type="InterPro" id="IPR016201">
    <property type="entry name" value="PSI"/>
</dbReference>
<dbReference type="InterPro" id="IPR052304">
    <property type="entry name" value="PTTG1IP"/>
</dbReference>
<dbReference type="PANTHER" id="PTHR15191:SF14">
    <property type="entry name" value="PITUITARY TUMOR-TRANSFORMING GENE 1 PROTEIN-INTERACTING PROTEIN"/>
    <property type="match status" value="1"/>
</dbReference>
<dbReference type="PANTHER" id="PTHR15191">
    <property type="entry name" value="PROTEIN CBG20567"/>
    <property type="match status" value="1"/>
</dbReference>
<dbReference type="SMART" id="SM00423">
    <property type="entry name" value="PSI"/>
    <property type="match status" value="1"/>
</dbReference>
<comment type="function">
    <text evidence="1">May facilitate PTTG1 nuclear translocation.</text>
</comment>
<comment type="subunit">
    <text evidence="1">Interacts with PTTG1.</text>
</comment>
<comment type="subcellular location">
    <subcellularLocation>
        <location evidence="1">Cell membrane</location>
        <topology evidence="1">Single-pass type I membrane protein</topology>
    </subcellularLocation>
    <subcellularLocation>
        <location evidence="1">Cytoplasm</location>
    </subcellularLocation>
    <subcellularLocation>
        <location evidence="1">Nucleus</location>
    </subcellularLocation>
    <text evidence="1">May be cytoplasmic and nuclear.</text>
</comment>
<feature type="signal peptide" evidence="2">
    <location>
        <begin position="1"/>
        <end position="29"/>
    </location>
</feature>
<feature type="chain" id="PRO_0000022185" description="Pituitary tumor-transforming gene 1 protein-interacting protein">
    <location>
        <begin position="30"/>
        <end position="174"/>
    </location>
</feature>
<feature type="topological domain" description="Extracellular" evidence="2">
    <location>
        <begin position="30"/>
        <end position="93"/>
    </location>
</feature>
<feature type="transmembrane region" description="Helical" evidence="2">
    <location>
        <begin position="94"/>
        <end position="114"/>
    </location>
</feature>
<feature type="topological domain" description="Cytoplasmic" evidence="2">
    <location>
        <begin position="115"/>
        <end position="174"/>
    </location>
</feature>
<feature type="domain" description="PSI">
    <location>
        <begin position="36"/>
        <end position="89"/>
    </location>
</feature>
<feature type="region of interest" description="Disordered" evidence="3">
    <location>
        <begin position="125"/>
        <end position="155"/>
    </location>
</feature>
<feature type="coiled-coil region" evidence="2">
    <location>
        <begin position="127"/>
        <end position="163"/>
    </location>
</feature>
<feature type="compositionally biased region" description="Basic and acidic residues" evidence="3">
    <location>
        <begin position="126"/>
        <end position="155"/>
    </location>
</feature>
<feature type="modified residue" description="Phosphotyrosine" evidence="5">
    <location>
        <position position="171"/>
    </location>
</feature>
<feature type="glycosylation site" description="N-linked (GlcNAc...) asparagine" evidence="2">
    <location>
        <position position="42"/>
    </location>
</feature>
<feature type="glycosylation site" description="N-linked (GlcNAc...) asparagine" evidence="2">
    <location>
        <position position="51"/>
    </location>
</feature>
<feature type="sequence conflict" description="In Ref. 1; BAC40985." evidence="4" ref="1">
    <original>L</original>
    <variation>R</variation>
    <location>
        <position position="8"/>
    </location>
</feature>
<feature type="sequence conflict" description="In Ref. 1; BAC40985." evidence="4" ref="1">
    <original>R</original>
    <variation>W</variation>
    <location>
        <position position="120"/>
    </location>
</feature>
<name>PTTG_MOUSE</name>
<sequence>MAPANLGLTPHWVMLLGAVLLLLLSGASAQEPPRVGCSEYTNRSCEECLRNVSCLWCNENKACMDYPVRKILPPASLCKLSSARWGVCWVNFEALIITMSVLGGSVLLGITVCCCYCCRRKKSRKPDKSDERAMREQEERRVRQEERRAEMKSRHDEIRKKYGLFKEQNPYEKF</sequence>
<gene>
    <name type="primary">Pttg1ip</name>
</gene>
<proteinExistence type="evidence at protein level"/>
<keyword id="KW-1003">Cell membrane</keyword>
<keyword id="KW-0175">Coiled coil</keyword>
<keyword id="KW-0963">Cytoplasm</keyword>
<keyword id="KW-0325">Glycoprotein</keyword>
<keyword id="KW-0472">Membrane</keyword>
<keyword id="KW-0539">Nucleus</keyword>
<keyword id="KW-0597">Phosphoprotein</keyword>
<keyword id="KW-1185">Reference proteome</keyword>
<keyword id="KW-0732">Signal</keyword>
<keyword id="KW-0812">Transmembrane</keyword>
<keyword id="KW-1133">Transmembrane helix</keyword>